<protein>
    <recommendedName>
        <fullName evidence="1">Multidrug resistance protein MdtH</fullName>
    </recommendedName>
</protein>
<name>MDTH_SHIBS</name>
<evidence type="ECO:0000255" key="1">
    <source>
        <dbReference type="HAMAP-Rule" id="MF_01529"/>
    </source>
</evidence>
<evidence type="ECO:0000305" key="2"/>
<comment type="subcellular location">
    <subcellularLocation>
        <location evidence="1">Cell inner membrane</location>
        <topology evidence="1">Multi-pass membrane protein</topology>
    </subcellularLocation>
</comment>
<comment type="similarity">
    <text evidence="1">Belongs to the major facilitator superfamily. DHA1 family. MdtH (TC 2.A.1.2.21) subfamily.</text>
</comment>
<comment type="sequence caution" evidence="2">
    <conflict type="erroneous initiation">
        <sequence resource="EMBL-CDS" id="ABB66588"/>
    </conflict>
</comment>
<dbReference type="EMBL" id="CP000036">
    <property type="protein sequence ID" value="ABB66588.1"/>
    <property type="status" value="ALT_INIT"/>
    <property type="molecule type" value="Genomic_DNA"/>
</dbReference>
<dbReference type="RefSeq" id="WP_000092216.1">
    <property type="nucleotide sequence ID" value="NC_007613.1"/>
</dbReference>
<dbReference type="SMR" id="Q31ZC0"/>
<dbReference type="KEGG" id="sbo:SBO_1999"/>
<dbReference type="HOGENOM" id="CLU_001265_60_2_6"/>
<dbReference type="Proteomes" id="UP000007067">
    <property type="component" value="Chromosome"/>
</dbReference>
<dbReference type="GO" id="GO:0005886">
    <property type="term" value="C:plasma membrane"/>
    <property type="evidence" value="ECO:0007669"/>
    <property type="project" value="UniProtKB-SubCell"/>
</dbReference>
<dbReference type="GO" id="GO:0022857">
    <property type="term" value="F:transmembrane transporter activity"/>
    <property type="evidence" value="ECO:0007669"/>
    <property type="project" value="UniProtKB-UniRule"/>
</dbReference>
<dbReference type="CDD" id="cd17329">
    <property type="entry name" value="MFS_MdtH_MDR_like"/>
    <property type="match status" value="1"/>
</dbReference>
<dbReference type="FunFam" id="1.20.1250.20:FF:000039">
    <property type="entry name" value="Multidrug resistance protein MdtH"/>
    <property type="match status" value="1"/>
</dbReference>
<dbReference type="Gene3D" id="1.20.1250.20">
    <property type="entry name" value="MFS general substrate transporter like domains"/>
    <property type="match status" value="1"/>
</dbReference>
<dbReference type="HAMAP" id="MF_01529">
    <property type="entry name" value="MFS_MdtH"/>
    <property type="match status" value="1"/>
</dbReference>
<dbReference type="InterPro" id="IPR011701">
    <property type="entry name" value="MFS"/>
</dbReference>
<dbReference type="InterPro" id="IPR020846">
    <property type="entry name" value="MFS_dom"/>
</dbReference>
<dbReference type="InterPro" id="IPR036259">
    <property type="entry name" value="MFS_trans_sf"/>
</dbReference>
<dbReference type="InterPro" id="IPR050171">
    <property type="entry name" value="MFS_Transporters"/>
</dbReference>
<dbReference type="InterPro" id="IPR022855">
    <property type="entry name" value="Multidrug-R_MdtH"/>
</dbReference>
<dbReference type="NCBIfam" id="NF008650">
    <property type="entry name" value="PRK11646.1"/>
    <property type="match status" value="1"/>
</dbReference>
<dbReference type="PANTHER" id="PTHR23517:SF2">
    <property type="entry name" value="MULTIDRUG RESISTANCE PROTEIN MDTH"/>
    <property type="match status" value="1"/>
</dbReference>
<dbReference type="PANTHER" id="PTHR23517">
    <property type="entry name" value="RESISTANCE PROTEIN MDTM, PUTATIVE-RELATED-RELATED"/>
    <property type="match status" value="1"/>
</dbReference>
<dbReference type="Pfam" id="PF07690">
    <property type="entry name" value="MFS_1"/>
    <property type="match status" value="1"/>
</dbReference>
<dbReference type="SUPFAM" id="SSF103473">
    <property type="entry name" value="MFS general substrate transporter"/>
    <property type="match status" value="1"/>
</dbReference>
<dbReference type="PROSITE" id="PS50850">
    <property type="entry name" value="MFS"/>
    <property type="match status" value="1"/>
</dbReference>
<reference key="1">
    <citation type="journal article" date="2005" name="Nucleic Acids Res.">
        <title>Genome dynamics and diversity of Shigella species, the etiologic agents of bacillary dysentery.</title>
        <authorList>
            <person name="Yang F."/>
            <person name="Yang J."/>
            <person name="Zhang X."/>
            <person name="Chen L."/>
            <person name="Jiang Y."/>
            <person name="Yan Y."/>
            <person name="Tang X."/>
            <person name="Wang J."/>
            <person name="Xiong Z."/>
            <person name="Dong J."/>
            <person name="Xue Y."/>
            <person name="Zhu Y."/>
            <person name="Xu X."/>
            <person name="Sun L."/>
            <person name="Chen S."/>
            <person name="Nie H."/>
            <person name="Peng J."/>
            <person name="Xu J."/>
            <person name="Wang Y."/>
            <person name="Yuan Z."/>
            <person name="Wen Y."/>
            <person name="Yao Z."/>
            <person name="Shen Y."/>
            <person name="Qiang B."/>
            <person name="Hou Y."/>
            <person name="Yu J."/>
            <person name="Jin Q."/>
        </authorList>
    </citation>
    <scope>NUCLEOTIDE SEQUENCE [LARGE SCALE GENOMIC DNA]</scope>
    <source>
        <strain>Sb227</strain>
    </source>
</reference>
<proteinExistence type="inferred from homology"/>
<accession>Q31ZC0</accession>
<sequence>MSRVSQARNLGKYFLLIDNMLVVLGFFVVFPLISIRFVDQMGWAAVMVGIALGLRQFIQQGLGIFGGAIADRFGAKPMIVTGMLMRAAGFATMGIAHEPWLLWFSCLLSGLGGTLFDPPRSALVVKLIRPQQRGRFFSLLMMQDSAGAVIGALLGSWLLQYDFRLVCATGAVLFVLCAAFNAWLLPAWKLSTVRTPVREGMTRVMRDKRFVTYVLTLAGYYMLAVQVMLPIMVNDVAGAPSAVKWMYAIEACLSLTLLYPIARWSEKHFRLEHRLMAGLLIMSLSMMPVGMVSGLQQLFTLICLFYIGSIIAEPARETLSASLADARARGSYMGFSRLGLAIGGAIGYIGGGWLFDLGKSAHQPELPWMMLGIIGIFTFLALGWQFSQKRAARRLLERDA</sequence>
<organism>
    <name type="scientific">Shigella boydii serotype 4 (strain Sb227)</name>
    <dbReference type="NCBI Taxonomy" id="300268"/>
    <lineage>
        <taxon>Bacteria</taxon>
        <taxon>Pseudomonadati</taxon>
        <taxon>Pseudomonadota</taxon>
        <taxon>Gammaproteobacteria</taxon>
        <taxon>Enterobacterales</taxon>
        <taxon>Enterobacteriaceae</taxon>
        <taxon>Shigella</taxon>
    </lineage>
</organism>
<keyword id="KW-0997">Cell inner membrane</keyword>
<keyword id="KW-1003">Cell membrane</keyword>
<keyword id="KW-0472">Membrane</keyword>
<keyword id="KW-0812">Transmembrane</keyword>
<keyword id="KW-1133">Transmembrane helix</keyword>
<keyword id="KW-0813">Transport</keyword>
<feature type="chain" id="PRO_0000280499" description="Multidrug resistance protein MdtH">
    <location>
        <begin position="1"/>
        <end position="400"/>
    </location>
</feature>
<feature type="topological domain" description="Cytoplasmic" evidence="1">
    <location>
        <begin position="1"/>
        <end position="12"/>
    </location>
</feature>
<feature type="transmembrane region" description="Helical" evidence="1">
    <location>
        <begin position="13"/>
        <end position="33"/>
    </location>
</feature>
<feature type="topological domain" description="Periplasmic" evidence="1">
    <location>
        <begin position="34"/>
        <end position="98"/>
    </location>
</feature>
<feature type="transmembrane region" description="Helical" evidence="1">
    <location>
        <begin position="99"/>
        <end position="116"/>
    </location>
</feature>
<feature type="topological domain" description="Cytoplasmic" evidence="1">
    <location>
        <begin position="117"/>
        <end position="138"/>
    </location>
</feature>
<feature type="transmembrane region" description="Helical" evidence="1">
    <location>
        <begin position="139"/>
        <end position="159"/>
    </location>
</feature>
<feature type="topological domain" description="Periplasmic" evidence="1">
    <location>
        <begin position="160"/>
        <end position="164"/>
    </location>
</feature>
<feature type="transmembrane region" description="Helical" evidence="1">
    <location>
        <begin position="165"/>
        <end position="185"/>
    </location>
</feature>
<feature type="topological domain" description="Cytoplasmic" evidence="1">
    <location>
        <begin position="186"/>
        <end position="213"/>
    </location>
</feature>
<feature type="transmembrane region" description="Helical" evidence="1">
    <location>
        <begin position="214"/>
        <end position="232"/>
    </location>
</feature>
<feature type="topological domain" description="Periplasmic" evidence="1">
    <location>
        <begin position="233"/>
        <end position="241"/>
    </location>
</feature>
<feature type="transmembrane region" description="Helical" evidence="1">
    <location>
        <begin position="242"/>
        <end position="262"/>
    </location>
</feature>
<feature type="topological domain" description="Cytoplasmic" evidence="1">
    <location>
        <begin position="263"/>
        <end position="274"/>
    </location>
</feature>
<feature type="transmembrane region" description="Helical" evidence="1">
    <location>
        <begin position="275"/>
        <end position="295"/>
    </location>
</feature>
<feature type="topological domain" description="Periplasmic" evidence="1">
    <location>
        <begin position="296"/>
        <end position="297"/>
    </location>
</feature>
<feature type="transmembrane region" description="Helical" evidence="1">
    <location>
        <begin position="298"/>
        <end position="318"/>
    </location>
</feature>
<feature type="topological domain" description="Cytoplasmic" evidence="1">
    <location>
        <begin position="319"/>
        <end position="337"/>
    </location>
</feature>
<feature type="transmembrane region" description="Helical" evidence="1">
    <location>
        <begin position="338"/>
        <end position="358"/>
    </location>
</feature>
<feature type="topological domain" description="Periplasmic" evidence="1">
    <location>
        <begin position="359"/>
        <end position="365"/>
    </location>
</feature>
<feature type="transmembrane region" description="Helical" evidence="1">
    <location>
        <begin position="366"/>
        <end position="386"/>
    </location>
</feature>
<feature type="topological domain" description="Cytoplasmic" evidence="1">
    <location>
        <begin position="387"/>
        <end position="400"/>
    </location>
</feature>
<gene>
    <name evidence="1" type="primary">mdtH</name>
    <name type="ordered locus">SBO_1999</name>
</gene>